<protein>
    <recommendedName>
        <fullName evidence="1">Anthranilate phosphoribosyltransferase</fullName>
        <ecNumber evidence="1">2.4.2.18</ecNumber>
    </recommendedName>
</protein>
<proteinExistence type="inferred from homology"/>
<dbReference type="EC" id="2.4.2.18" evidence="1"/>
<dbReference type="EMBL" id="AL954747">
    <property type="protein sequence ID" value="CAD83924.1"/>
    <property type="molecule type" value="Genomic_DNA"/>
</dbReference>
<dbReference type="RefSeq" id="WP_011110665.1">
    <property type="nucleotide sequence ID" value="NC_004757.1"/>
</dbReference>
<dbReference type="SMR" id="Q82Y74"/>
<dbReference type="STRING" id="228410.NE0013"/>
<dbReference type="GeneID" id="87103220"/>
<dbReference type="KEGG" id="neu:NE0013"/>
<dbReference type="eggNOG" id="COG0547">
    <property type="taxonomic scope" value="Bacteria"/>
</dbReference>
<dbReference type="HOGENOM" id="CLU_034315_2_1_4"/>
<dbReference type="OrthoDB" id="9806430at2"/>
<dbReference type="PhylomeDB" id="Q82Y74"/>
<dbReference type="UniPathway" id="UPA00035">
    <property type="reaction ID" value="UER00041"/>
</dbReference>
<dbReference type="Proteomes" id="UP000001416">
    <property type="component" value="Chromosome"/>
</dbReference>
<dbReference type="GO" id="GO:0005829">
    <property type="term" value="C:cytosol"/>
    <property type="evidence" value="ECO:0007669"/>
    <property type="project" value="TreeGrafter"/>
</dbReference>
<dbReference type="GO" id="GO:0004048">
    <property type="term" value="F:anthranilate phosphoribosyltransferase activity"/>
    <property type="evidence" value="ECO:0007669"/>
    <property type="project" value="UniProtKB-UniRule"/>
</dbReference>
<dbReference type="GO" id="GO:0000287">
    <property type="term" value="F:magnesium ion binding"/>
    <property type="evidence" value="ECO:0007669"/>
    <property type="project" value="UniProtKB-UniRule"/>
</dbReference>
<dbReference type="GO" id="GO:0000162">
    <property type="term" value="P:L-tryptophan biosynthetic process"/>
    <property type="evidence" value="ECO:0007669"/>
    <property type="project" value="UniProtKB-UniRule"/>
</dbReference>
<dbReference type="FunFam" id="3.40.1030.10:FF:000002">
    <property type="entry name" value="Anthranilate phosphoribosyltransferase"/>
    <property type="match status" value="1"/>
</dbReference>
<dbReference type="Gene3D" id="3.40.1030.10">
    <property type="entry name" value="Nucleoside phosphorylase/phosphoribosyltransferase catalytic domain"/>
    <property type="match status" value="1"/>
</dbReference>
<dbReference type="Gene3D" id="1.20.970.10">
    <property type="entry name" value="Transferase, Pyrimidine Nucleoside Phosphorylase, Chain C"/>
    <property type="match status" value="1"/>
</dbReference>
<dbReference type="HAMAP" id="MF_00211">
    <property type="entry name" value="TrpD"/>
    <property type="match status" value="1"/>
</dbReference>
<dbReference type="InterPro" id="IPR005940">
    <property type="entry name" value="Anthranilate_Pribosyl_Tfrase"/>
</dbReference>
<dbReference type="InterPro" id="IPR000312">
    <property type="entry name" value="Glycosyl_Trfase_fam3"/>
</dbReference>
<dbReference type="InterPro" id="IPR017459">
    <property type="entry name" value="Glycosyl_Trfase_fam3_N_dom"/>
</dbReference>
<dbReference type="InterPro" id="IPR036320">
    <property type="entry name" value="Glycosyl_Trfase_fam3_N_dom_sf"/>
</dbReference>
<dbReference type="InterPro" id="IPR035902">
    <property type="entry name" value="Nuc_phospho_transferase"/>
</dbReference>
<dbReference type="NCBIfam" id="TIGR01245">
    <property type="entry name" value="trpD"/>
    <property type="match status" value="1"/>
</dbReference>
<dbReference type="PANTHER" id="PTHR43285">
    <property type="entry name" value="ANTHRANILATE PHOSPHORIBOSYLTRANSFERASE"/>
    <property type="match status" value="1"/>
</dbReference>
<dbReference type="PANTHER" id="PTHR43285:SF2">
    <property type="entry name" value="ANTHRANILATE PHOSPHORIBOSYLTRANSFERASE"/>
    <property type="match status" value="1"/>
</dbReference>
<dbReference type="Pfam" id="PF02885">
    <property type="entry name" value="Glycos_trans_3N"/>
    <property type="match status" value="1"/>
</dbReference>
<dbReference type="Pfam" id="PF00591">
    <property type="entry name" value="Glycos_transf_3"/>
    <property type="match status" value="1"/>
</dbReference>
<dbReference type="SUPFAM" id="SSF52418">
    <property type="entry name" value="Nucleoside phosphorylase/phosphoribosyltransferase catalytic domain"/>
    <property type="match status" value="1"/>
</dbReference>
<dbReference type="SUPFAM" id="SSF47648">
    <property type="entry name" value="Nucleoside phosphorylase/phosphoribosyltransferase N-terminal domain"/>
    <property type="match status" value="1"/>
</dbReference>
<name>TRPD_NITEU</name>
<gene>
    <name evidence="1" type="primary">trpD</name>
    <name type="ordered locus">NE0013</name>
</gene>
<keyword id="KW-0028">Amino-acid biosynthesis</keyword>
<keyword id="KW-0057">Aromatic amino acid biosynthesis</keyword>
<keyword id="KW-0328">Glycosyltransferase</keyword>
<keyword id="KW-0460">Magnesium</keyword>
<keyword id="KW-0479">Metal-binding</keyword>
<keyword id="KW-1185">Reference proteome</keyword>
<keyword id="KW-0808">Transferase</keyword>
<keyword id="KW-0822">Tryptophan biosynthesis</keyword>
<reference key="1">
    <citation type="journal article" date="2003" name="J. Bacteriol.">
        <title>Complete genome sequence of the ammonia-oxidizing bacterium and obligate chemolithoautotroph Nitrosomonas europaea.</title>
        <authorList>
            <person name="Chain P."/>
            <person name="Lamerdin J.E."/>
            <person name="Larimer F.W."/>
            <person name="Regala W."/>
            <person name="Lao V."/>
            <person name="Land M.L."/>
            <person name="Hauser L."/>
            <person name="Hooper A.B."/>
            <person name="Klotz M.G."/>
            <person name="Norton J."/>
            <person name="Sayavedra-Soto L.A."/>
            <person name="Arciero D.M."/>
            <person name="Hommes N.G."/>
            <person name="Whittaker M.M."/>
            <person name="Arp D.J."/>
        </authorList>
    </citation>
    <scope>NUCLEOTIDE SEQUENCE [LARGE SCALE GENOMIC DNA]</scope>
    <source>
        <strain>ATCC 19718 / CIP 103999 / KCTC 2705 / NBRC 14298</strain>
    </source>
</reference>
<accession>Q82Y74</accession>
<organism>
    <name type="scientific">Nitrosomonas europaea (strain ATCC 19718 / CIP 103999 / KCTC 2705 / NBRC 14298)</name>
    <dbReference type="NCBI Taxonomy" id="228410"/>
    <lineage>
        <taxon>Bacteria</taxon>
        <taxon>Pseudomonadati</taxon>
        <taxon>Pseudomonadota</taxon>
        <taxon>Betaproteobacteria</taxon>
        <taxon>Nitrosomonadales</taxon>
        <taxon>Nitrosomonadaceae</taxon>
        <taxon>Nitrosomonas</taxon>
    </lineage>
</organism>
<sequence length="341" mass="35889">MNPQAILARILEQHEIPYEEMIELMRAIMSGNVSPVMTAALVTGLRIKRESIGEISAAAQVMRELAVRIEVPDASHLVDTCGTGGDGCNTFNISTTSAFVAAAAGAQVAKHGGRSVSGKVGSADVLEAIGINLDQTPDQIARSITEVGIGFMFAPNFHHAMKHAAPVRRELGVRTVFNILGPLTNPAGASNQLLGVYHADLTGVLAQVLLRLGSRHAMIVHGSDGLDEITLSGPTKIAELNAGEVREYSVQPEDFGLERAALTSLQVNSTEDAQAMLLSVLDNHPGPARDIVLLNAGAAIYVAGKADSWARGVETARDMLASGAAKQKMQALVEFSNQVSA</sequence>
<feature type="chain" id="PRO_0000154465" description="Anthranilate phosphoribosyltransferase">
    <location>
        <begin position="1"/>
        <end position="341"/>
    </location>
</feature>
<feature type="binding site" evidence="1">
    <location>
        <position position="82"/>
    </location>
    <ligand>
        <name>5-phospho-alpha-D-ribose 1-diphosphate</name>
        <dbReference type="ChEBI" id="CHEBI:58017"/>
    </ligand>
</feature>
<feature type="binding site" evidence="1">
    <location>
        <position position="82"/>
    </location>
    <ligand>
        <name>anthranilate</name>
        <dbReference type="ChEBI" id="CHEBI:16567"/>
        <label>1</label>
    </ligand>
</feature>
<feature type="binding site" evidence="1">
    <location>
        <begin position="85"/>
        <end position="86"/>
    </location>
    <ligand>
        <name>5-phospho-alpha-D-ribose 1-diphosphate</name>
        <dbReference type="ChEBI" id="CHEBI:58017"/>
    </ligand>
</feature>
<feature type="binding site" evidence="1">
    <location>
        <position position="90"/>
    </location>
    <ligand>
        <name>5-phospho-alpha-D-ribose 1-diphosphate</name>
        <dbReference type="ChEBI" id="CHEBI:58017"/>
    </ligand>
</feature>
<feature type="binding site" evidence="1">
    <location>
        <begin position="92"/>
        <end position="95"/>
    </location>
    <ligand>
        <name>5-phospho-alpha-D-ribose 1-diphosphate</name>
        <dbReference type="ChEBI" id="CHEBI:58017"/>
    </ligand>
</feature>
<feature type="binding site" evidence="1">
    <location>
        <position position="94"/>
    </location>
    <ligand>
        <name>Mg(2+)</name>
        <dbReference type="ChEBI" id="CHEBI:18420"/>
        <label>1</label>
    </ligand>
</feature>
<feature type="binding site" evidence="1">
    <location>
        <begin position="110"/>
        <end position="118"/>
    </location>
    <ligand>
        <name>5-phospho-alpha-D-ribose 1-diphosphate</name>
        <dbReference type="ChEBI" id="CHEBI:58017"/>
    </ligand>
</feature>
<feature type="binding site" evidence="1">
    <location>
        <position position="122"/>
    </location>
    <ligand>
        <name>5-phospho-alpha-D-ribose 1-diphosphate</name>
        <dbReference type="ChEBI" id="CHEBI:58017"/>
    </ligand>
</feature>
<feature type="binding site" evidence="1">
    <location>
        <position position="168"/>
    </location>
    <ligand>
        <name>anthranilate</name>
        <dbReference type="ChEBI" id="CHEBI:16567"/>
        <label>2</label>
    </ligand>
</feature>
<feature type="binding site" evidence="1">
    <location>
        <position position="227"/>
    </location>
    <ligand>
        <name>Mg(2+)</name>
        <dbReference type="ChEBI" id="CHEBI:18420"/>
        <label>2</label>
    </ligand>
</feature>
<feature type="binding site" evidence="1">
    <location>
        <position position="228"/>
    </location>
    <ligand>
        <name>Mg(2+)</name>
        <dbReference type="ChEBI" id="CHEBI:18420"/>
        <label>1</label>
    </ligand>
</feature>
<feature type="binding site" evidence="1">
    <location>
        <position position="228"/>
    </location>
    <ligand>
        <name>Mg(2+)</name>
        <dbReference type="ChEBI" id="CHEBI:18420"/>
        <label>2</label>
    </ligand>
</feature>
<evidence type="ECO:0000255" key="1">
    <source>
        <dbReference type="HAMAP-Rule" id="MF_00211"/>
    </source>
</evidence>
<comment type="function">
    <text evidence="1">Catalyzes the transfer of the phosphoribosyl group of 5-phosphorylribose-1-pyrophosphate (PRPP) to anthranilate to yield N-(5'-phosphoribosyl)-anthranilate (PRA).</text>
</comment>
<comment type="catalytic activity">
    <reaction evidence="1">
        <text>N-(5-phospho-beta-D-ribosyl)anthranilate + diphosphate = 5-phospho-alpha-D-ribose 1-diphosphate + anthranilate</text>
        <dbReference type="Rhea" id="RHEA:11768"/>
        <dbReference type="ChEBI" id="CHEBI:16567"/>
        <dbReference type="ChEBI" id="CHEBI:18277"/>
        <dbReference type="ChEBI" id="CHEBI:33019"/>
        <dbReference type="ChEBI" id="CHEBI:58017"/>
        <dbReference type="EC" id="2.4.2.18"/>
    </reaction>
</comment>
<comment type="cofactor">
    <cofactor evidence="1">
        <name>Mg(2+)</name>
        <dbReference type="ChEBI" id="CHEBI:18420"/>
    </cofactor>
    <text evidence="1">Binds 2 magnesium ions per monomer.</text>
</comment>
<comment type="pathway">
    <text evidence="1">Amino-acid biosynthesis; L-tryptophan biosynthesis; L-tryptophan from chorismate: step 2/5.</text>
</comment>
<comment type="subunit">
    <text evidence="1">Homodimer.</text>
</comment>
<comment type="similarity">
    <text evidence="1">Belongs to the anthranilate phosphoribosyltransferase family.</text>
</comment>